<accession>P71384</accession>
<gene>
    <name evidence="1" type="primary">fumC</name>
    <name type="ordered locus">HI_1398</name>
</gene>
<reference key="1">
    <citation type="journal article" date="1995" name="Science">
        <title>Whole-genome random sequencing and assembly of Haemophilus influenzae Rd.</title>
        <authorList>
            <person name="Fleischmann R.D."/>
            <person name="Adams M.D."/>
            <person name="White O."/>
            <person name="Clayton R.A."/>
            <person name="Kirkness E.F."/>
            <person name="Kerlavage A.R."/>
            <person name="Bult C.J."/>
            <person name="Tomb J.-F."/>
            <person name="Dougherty B.A."/>
            <person name="Merrick J.M."/>
            <person name="McKenney K."/>
            <person name="Sutton G.G."/>
            <person name="FitzHugh W."/>
            <person name="Fields C.A."/>
            <person name="Gocayne J.D."/>
            <person name="Scott J.D."/>
            <person name="Shirley R."/>
            <person name="Liu L.-I."/>
            <person name="Glodek A."/>
            <person name="Kelley J.M."/>
            <person name="Weidman J.F."/>
            <person name="Phillips C.A."/>
            <person name="Spriggs T."/>
            <person name="Hedblom E."/>
            <person name="Cotton M.D."/>
            <person name="Utterback T.R."/>
            <person name="Hanna M.C."/>
            <person name="Nguyen D.T."/>
            <person name="Saudek D.M."/>
            <person name="Brandon R.C."/>
            <person name="Fine L.D."/>
            <person name="Fritchman J.L."/>
            <person name="Fuhrmann J.L."/>
            <person name="Geoghagen N.S.M."/>
            <person name="Gnehm C.L."/>
            <person name="McDonald L.A."/>
            <person name="Small K.V."/>
            <person name="Fraser C.M."/>
            <person name="Smith H.O."/>
            <person name="Venter J.C."/>
        </authorList>
    </citation>
    <scope>NUCLEOTIDE SEQUENCE [LARGE SCALE GENOMIC DNA]</scope>
    <source>
        <strain>ATCC 51907 / DSM 11121 / KW20 / Rd</strain>
    </source>
</reference>
<sequence length="464" mass="50482">MAFRIEKDTMGEVQVLADKYWAAQTERSRNNFKIGPAASMPHEIIEAFGYLKKAAAFANHDLGVLPLEKRDLIALACDEILANKLDDQFPLVIWQTGSGTQSNMNVNEVVANRAHVLNGGKLGEKSIIHPNDDVNKSQSSNDTFPTAMHIAAYKKVVEHTIPCVERLQKTFAAKSEAFKNVVKIGRTHLMDATPLTLGQEFSAYAAQLDFGLKALKNTLPHLSQLALGGTAVGTGLNTPKGYDLKVVDYIAKFTALPFVTADNKFEALAAHDAIVETHGALRQLAMSLFKIANDIRLLASGPRSGIGEILIPENEPGSSIMPGKVNPTQCEXMTMVCAQVFGNDTTIAFVGSQGHFQLNVFNPVMIANFLQSAQLLGDACVSFDEHCAVGIEPNYPRIKQQLENSLMLVTALNTHIGYENAAKIAKTAHKNGTTLREEAINLGLVSAEDFDKWVRPEDMVGSLK</sequence>
<protein>
    <recommendedName>
        <fullName evidence="1">Fumarate hydratase class II</fullName>
        <shortName evidence="1">Fumarase C</shortName>
        <ecNumber evidence="1">4.2.1.2</ecNumber>
    </recommendedName>
    <alternativeName>
        <fullName evidence="1">Aerobic fumarase</fullName>
    </alternativeName>
    <alternativeName>
        <fullName evidence="1">Iron-independent fumarase</fullName>
    </alternativeName>
</protein>
<comment type="function">
    <text evidence="1">Involved in the TCA cycle. Catalyzes the stereospecific interconversion of fumarate to L-malate.</text>
</comment>
<comment type="catalytic activity">
    <reaction evidence="1">
        <text>(S)-malate = fumarate + H2O</text>
        <dbReference type="Rhea" id="RHEA:12460"/>
        <dbReference type="ChEBI" id="CHEBI:15377"/>
        <dbReference type="ChEBI" id="CHEBI:15589"/>
        <dbReference type="ChEBI" id="CHEBI:29806"/>
        <dbReference type="EC" id="4.2.1.2"/>
    </reaction>
</comment>
<comment type="pathway">
    <text evidence="1">Carbohydrate metabolism; tricarboxylic acid cycle; (S)-malate from fumarate: step 1/1.</text>
</comment>
<comment type="subunit">
    <text evidence="1">Homotetramer.</text>
</comment>
<comment type="subcellular location">
    <subcellularLocation>
        <location evidence="1">Cytoplasm</location>
    </subcellularLocation>
</comment>
<comment type="miscellaneous">
    <text evidence="1">There are 2 substrate-binding sites: the catalytic A site, and the non-catalytic B site that may play a role in the transfer of substrate or product between the active site and the solvent. Alternatively, the B site may bind allosteric effectors.</text>
</comment>
<comment type="similarity">
    <text evidence="1">Belongs to the class-II fumarase/aspartase family. Fumarase subfamily.</text>
</comment>
<evidence type="ECO:0000255" key="1">
    <source>
        <dbReference type="HAMAP-Rule" id="MF_00743"/>
    </source>
</evidence>
<dbReference type="EC" id="4.2.1.2" evidence="1"/>
<dbReference type="EMBL" id="L42023">
    <property type="protein sequence ID" value="AAC23045.1"/>
    <property type="molecule type" value="Genomic_DNA"/>
</dbReference>
<dbReference type="RefSeq" id="NP_439551.1">
    <property type="nucleotide sequence ID" value="NC_000907.1"/>
</dbReference>
<dbReference type="STRING" id="71421.HI_1398"/>
<dbReference type="EnsemblBacteria" id="AAC23045">
    <property type="protein sequence ID" value="AAC23045"/>
    <property type="gene ID" value="HI_1398"/>
</dbReference>
<dbReference type="KEGG" id="hin:HI_1398"/>
<dbReference type="PATRIC" id="fig|71421.8.peg.1458"/>
<dbReference type="eggNOG" id="COG0114">
    <property type="taxonomic scope" value="Bacteria"/>
</dbReference>
<dbReference type="HOGENOM" id="CLU_021594_4_1_6"/>
<dbReference type="OrthoDB" id="9802809at2"/>
<dbReference type="PhylomeDB" id="P71384"/>
<dbReference type="BioCyc" id="HINF71421:G1GJ1-1425-MONOMER"/>
<dbReference type="UniPathway" id="UPA00223">
    <property type="reaction ID" value="UER01007"/>
</dbReference>
<dbReference type="Proteomes" id="UP000000579">
    <property type="component" value="Chromosome"/>
</dbReference>
<dbReference type="GO" id="GO:0005737">
    <property type="term" value="C:cytoplasm"/>
    <property type="evidence" value="ECO:0007669"/>
    <property type="project" value="UniProtKB-SubCell"/>
</dbReference>
<dbReference type="GO" id="GO:0004333">
    <property type="term" value="F:fumarate hydratase activity"/>
    <property type="evidence" value="ECO:0000318"/>
    <property type="project" value="GO_Central"/>
</dbReference>
<dbReference type="GO" id="GO:0006106">
    <property type="term" value="P:fumarate metabolic process"/>
    <property type="evidence" value="ECO:0000318"/>
    <property type="project" value="GO_Central"/>
</dbReference>
<dbReference type="GO" id="GO:0006108">
    <property type="term" value="P:malate metabolic process"/>
    <property type="evidence" value="ECO:0000318"/>
    <property type="project" value="GO_Central"/>
</dbReference>
<dbReference type="GO" id="GO:0006099">
    <property type="term" value="P:tricarboxylic acid cycle"/>
    <property type="evidence" value="ECO:0000318"/>
    <property type="project" value="GO_Central"/>
</dbReference>
<dbReference type="CDD" id="cd01362">
    <property type="entry name" value="Fumarase_classII"/>
    <property type="match status" value="1"/>
</dbReference>
<dbReference type="FunFam" id="1.10.40.30:FF:000002">
    <property type="entry name" value="Fumarate hydratase class II"/>
    <property type="match status" value="1"/>
</dbReference>
<dbReference type="FunFam" id="1.10.275.10:FF:000001">
    <property type="entry name" value="Fumarate hydratase, mitochondrial"/>
    <property type="match status" value="1"/>
</dbReference>
<dbReference type="FunFam" id="1.20.200.10:FF:000001">
    <property type="entry name" value="Fumarate hydratase, mitochondrial"/>
    <property type="match status" value="1"/>
</dbReference>
<dbReference type="Gene3D" id="1.10.40.30">
    <property type="entry name" value="Fumarase/aspartase (C-terminal domain)"/>
    <property type="match status" value="1"/>
</dbReference>
<dbReference type="Gene3D" id="1.20.200.10">
    <property type="entry name" value="Fumarase/aspartase (Central domain)"/>
    <property type="match status" value="1"/>
</dbReference>
<dbReference type="Gene3D" id="1.10.275.10">
    <property type="entry name" value="Fumarase/aspartase (N-terminal domain)"/>
    <property type="match status" value="1"/>
</dbReference>
<dbReference type="HAMAP" id="MF_00743">
    <property type="entry name" value="FumaraseC"/>
    <property type="match status" value="1"/>
</dbReference>
<dbReference type="InterPro" id="IPR005677">
    <property type="entry name" value="Fum_hydII"/>
</dbReference>
<dbReference type="InterPro" id="IPR024083">
    <property type="entry name" value="Fumarase/histidase_N"/>
</dbReference>
<dbReference type="InterPro" id="IPR018951">
    <property type="entry name" value="Fumarase_C_C"/>
</dbReference>
<dbReference type="InterPro" id="IPR020557">
    <property type="entry name" value="Fumarate_lyase_CS"/>
</dbReference>
<dbReference type="InterPro" id="IPR000362">
    <property type="entry name" value="Fumarate_lyase_fam"/>
</dbReference>
<dbReference type="InterPro" id="IPR022761">
    <property type="entry name" value="Fumarate_lyase_N"/>
</dbReference>
<dbReference type="InterPro" id="IPR008948">
    <property type="entry name" value="L-Aspartase-like"/>
</dbReference>
<dbReference type="NCBIfam" id="TIGR00979">
    <property type="entry name" value="fumC_II"/>
    <property type="match status" value="1"/>
</dbReference>
<dbReference type="NCBIfam" id="NF008909">
    <property type="entry name" value="PRK12273.1"/>
    <property type="match status" value="1"/>
</dbReference>
<dbReference type="PANTHER" id="PTHR11444">
    <property type="entry name" value="ASPARTATEAMMONIA/ARGININOSUCCINATE/ADENYLOSUCCINATE LYASE"/>
    <property type="match status" value="1"/>
</dbReference>
<dbReference type="PANTHER" id="PTHR11444:SF1">
    <property type="entry name" value="FUMARATE HYDRATASE, MITOCHONDRIAL"/>
    <property type="match status" value="1"/>
</dbReference>
<dbReference type="Pfam" id="PF10415">
    <property type="entry name" value="FumaraseC_C"/>
    <property type="match status" value="1"/>
</dbReference>
<dbReference type="Pfam" id="PF00206">
    <property type="entry name" value="Lyase_1"/>
    <property type="match status" value="1"/>
</dbReference>
<dbReference type="PRINTS" id="PR00149">
    <property type="entry name" value="FUMRATELYASE"/>
</dbReference>
<dbReference type="SUPFAM" id="SSF48557">
    <property type="entry name" value="L-aspartase-like"/>
    <property type="match status" value="1"/>
</dbReference>
<dbReference type="PROSITE" id="PS00163">
    <property type="entry name" value="FUMARATE_LYASES"/>
    <property type="match status" value="1"/>
</dbReference>
<organism>
    <name type="scientific">Haemophilus influenzae (strain ATCC 51907 / DSM 11121 / KW20 / Rd)</name>
    <dbReference type="NCBI Taxonomy" id="71421"/>
    <lineage>
        <taxon>Bacteria</taxon>
        <taxon>Pseudomonadati</taxon>
        <taxon>Pseudomonadota</taxon>
        <taxon>Gammaproteobacteria</taxon>
        <taxon>Pasteurellales</taxon>
        <taxon>Pasteurellaceae</taxon>
        <taxon>Haemophilus</taxon>
    </lineage>
</organism>
<name>FUMC_HAEIN</name>
<keyword id="KW-0963">Cytoplasm</keyword>
<keyword id="KW-0456">Lyase</keyword>
<keyword id="KW-1185">Reference proteome</keyword>
<keyword id="KW-0816">Tricarboxylic acid cycle</keyword>
<feature type="chain" id="PRO_0000161279" description="Fumarate hydratase class II">
    <location>
        <begin position="1"/>
        <end position="464"/>
    </location>
</feature>
<feature type="active site" description="Proton donor/acceptor" evidence="1">
    <location>
        <position position="188"/>
    </location>
</feature>
<feature type="active site" evidence="1">
    <location>
        <position position="318"/>
    </location>
</feature>
<feature type="binding site" evidence="1">
    <location>
        <begin position="98"/>
        <end position="100"/>
    </location>
    <ligand>
        <name>substrate</name>
    </ligand>
</feature>
<feature type="binding site" description="in site B" evidence="1">
    <location>
        <begin position="129"/>
        <end position="132"/>
    </location>
    <ligand>
        <name>substrate</name>
    </ligand>
</feature>
<feature type="binding site" evidence="1">
    <location>
        <begin position="139"/>
        <end position="141"/>
    </location>
    <ligand>
        <name>substrate</name>
    </ligand>
</feature>
<feature type="binding site" evidence="1">
    <location>
        <position position="187"/>
    </location>
    <ligand>
        <name>substrate</name>
    </ligand>
</feature>
<feature type="binding site" evidence="1">
    <location>
        <position position="319"/>
    </location>
    <ligand>
        <name>substrate</name>
    </ligand>
</feature>
<feature type="binding site" evidence="1">
    <location>
        <begin position="324"/>
        <end position="326"/>
    </location>
    <ligand>
        <name>substrate</name>
    </ligand>
</feature>
<feature type="site" description="Important for catalytic activity" evidence="1">
    <location>
        <position position="331"/>
    </location>
</feature>
<proteinExistence type="inferred from homology"/>